<sequence>MAVTKELLQMDLYALLGIEEKAADKEVKKAYRQKALSCHPDKNPDNPRAAELFHQLSQALEVLTDAAARAAYDKVRKAKKQAAERTQRLDENRKKVKLDLEARERQAQAHGSEEEEESRSATTLEQEIARLREEGSRQLEEQQRLIQEQIRQDREQRLRGRTENTEGKGTPKLKLKWKCKKEDESQGGYSRDVLLRLLQKYGEVLNLVLSRKKAGNAIVEFATVRAAELAVRNEVGLADNPLKVSWLEGQPQSTVDPGPPGLSKGSVLSERDFESLVMMRMRQAAERQQLIAQMQQEDEGRPT</sequence>
<organism>
    <name type="scientific">Mus musculus</name>
    <name type="common">Mouse</name>
    <dbReference type="NCBI Taxonomy" id="10090"/>
    <lineage>
        <taxon>Eukaryota</taxon>
        <taxon>Metazoa</taxon>
        <taxon>Chordata</taxon>
        <taxon>Craniata</taxon>
        <taxon>Vertebrata</taxon>
        <taxon>Euteleostomi</taxon>
        <taxon>Mammalia</taxon>
        <taxon>Eutheria</taxon>
        <taxon>Euarchontoglires</taxon>
        <taxon>Glires</taxon>
        <taxon>Rodentia</taxon>
        <taxon>Myomorpha</taxon>
        <taxon>Muroidea</taxon>
        <taxon>Muridae</taxon>
        <taxon>Murinae</taxon>
        <taxon>Mus</taxon>
        <taxon>Mus</taxon>
    </lineage>
</organism>
<dbReference type="EMBL" id="AL772264">
    <property type="status" value="NOT_ANNOTATED_CDS"/>
    <property type="molecule type" value="Genomic_DNA"/>
</dbReference>
<dbReference type="EMBL" id="BC013487">
    <property type="protein sequence ID" value="AAH13487.1"/>
    <property type="molecule type" value="mRNA"/>
</dbReference>
<dbReference type="EMBL" id="AK077385">
    <property type="protein sequence ID" value="BAC36778.1"/>
    <property type="molecule type" value="mRNA"/>
</dbReference>
<dbReference type="CCDS" id="CCDS16593.1"/>
<dbReference type="RefSeq" id="NP_631878.2">
    <property type="nucleotide sequence ID" value="NM_139139.2"/>
</dbReference>
<dbReference type="SMR" id="Q91WT4"/>
<dbReference type="BioGRID" id="213422">
    <property type="interactions" value="71"/>
</dbReference>
<dbReference type="FunCoup" id="Q91WT4">
    <property type="interactions" value="4354"/>
</dbReference>
<dbReference type="STRING" id="10090.ENSMUSP00000041841"/>
<dbReference type="iPTMnet" id="Q91WT4"/>
<dbReference type="PhosphoSitePlus" id="Q91WT4"/>
<dbReference type="jPOST" id="Q91WT4"/>
<dbReference type="PaxDb" id="10090-ENSMUSP00000041841"/>
<dbReference type="PeptideAtlas" id="Q91WT4"/>
<dbReference type="ProteomicsDB" id="277460"/>
<dbReference type="Pumba" id="Q91WT4"/>
<dbReference type="Antibodypedia" id="49787">
    <property type="antibodies" value="169 antibodies from 24 providers"/>
</dbReference>
<dbReference type="DNASU" id="69408"/>
<dbReference type="Ensembl" id="ENSMUST00000038439.4">
    <property type="protein sequence ID" value="ENSMUSP00000041841.4"/>
    <property type="gene ID" value="ENSMUSG00000034278.4"/>
</dbReference>
<dbReference type="GeneID" id="69408"/>
<dbReference type="KEGG" id="mmu:69408"/>
<dbReference type="UCSC" id="uc008ltg.2">
    <property type="organism name" value="mouse"/>
</dbReference>
<dbReference type="AGR" id="MGI:1916658"/>
<dbReference type="CTD" id="55192"/>
<dbReference type="MGI" id="MGI:1916658">
    <property type="gene designation" value="Dnajc17"/>
</dbReference>
<dbReference type="VEuPathDB" id="HostDB:ENSMUSG00000034278"/>
<dbReference type="eggNOG" id="KOG0691">
    <property type="taxonomic scope" value="Eukaryota"/>
</dbReference>
<dbReference type="GeneTree" id="ENSGT00940000155132"/>
<dbReference type="HOGENOM" id="CLU_045732_1_0_1"/>
<dbReference type="InParanoid" id="Q91WT4"/>
<dbReference type="OMA" id="NPLHFQW"/>
<dbReference type="OrthoDB" id="259708at2759"/>
<dbReference type="PhylomeDB" id="Q91WT4"/>
<dbReference type="TreeFam" id="TF321770"/>
<dbReference type="BioGRID-ORCS" id="69408">
    <property type="hits" value="22 hits in 80 CRISPR screens"/>
</dbReference>
<dbReference type="ChiTaRS" id="Dnajc17">
    <property type="organism name" value="mouse"/>
</dbReference>
<dbReference type="PRO" id="PR:Q91WT4"/>
<dbReference type="Proteomes" id="UP000000589">
    <property type="component" value="Chromosome 2"/>
</dbReference>
<dbReference type="RNAct" id="Q91WT4">
    <property type="molecule type" value="protein"/>
</dbReference>
<dbReference type="Bgee" id="ENSMUSG00000034278">
    <property type="expression patterns" value="Expressed in lens of camera-type eye and 65 other cell types or tissues"/>
</dbReference>
<dbReference type="GO" id="GO:0005737">
    <property type="term" value="C:cytoplasm"/>
    <property type="evidence" value="ECO:0000266"/>
    <property type="project" value="MGI"/>
</dbReference>
<dbReference type="GO" id="GO:0005634">
    <property type="term" value="C:nucleus"/>
    <property type="evidence" value="ECO:0000266"/>
    <property type="project" value="MGI"/>
</dbReference>
<dbReference type="GO" id="GO:0003723">
    <property type="term" value="F:RNA binding"/>
    <property type="evidence" value="ECO:0007669"/>
    <property type="project" value="UniProtKB-KW"/>
</dbReference>
<dbReference type="GO" id="GO:0000122">
    <property type="term" value="P:negative regulation of transcription by RNA polymerase II"/>
    <property type="evidence" value="ECO:0000316"/>
    <property type="project" value="MGI"/>
</dbReference>
<dbReference type="CDD" id="cd06257">
    <property type="entry name" value="DnaJ"/>
    <property type="match status" value="1"/>
</dbReference>
<dbReference type="CDD" id="cd12429">
    <property type="entry name" value="RRM_DNAJC17"/>
    <property type="match status" value="1"/>
</dbReference>
<dbReference type="FunFam" id="1.10.287.110:FF:000059">
    <property type="entry name" value="dnaJ homolog subfamily C member 17"/>
    <property type="match status" value="1"/>
</dbReference>
<dbReference type="Gene3D" id="3.30.70.330">
    <property type="match status" value="1"/>
</dbReference>
<dbReference type="Gene3D" id="1.10.287.110">
    <property type="entry name" value="DnaJ domain"/>
    <property type="match status" value="1"/>
</dbReference>
<dbReference type="InterPro" id="IPR001623">
    <property type="entry name" value="DnaJ_domain"/>
</dbReference>
<dbReference type="InterPro" id="IPR034254">
    <property type="entry name" value="DNAJC17_RRM"/>
</dbReference>
<dbReference type="InterPro" id="IPR036869">
    <property type="entry name" value="J_dom_sf"/>
</dbReference>
<dbReference type="InterPro" id="IPR012677">
    <property type="entry name" value="Nucleotide-bd_a/b_plait_sf"/>
</dbReference>
<dbReference type="InterPro" id="IPR052094">
    <property type="entry name" value="Pre-mRNA-splicing_ERAD"/>
</dbReference>
<dbReference type="InterPro" id="IPR035979">
    <property type="entry name" value="RBD_domain_sf"/>
</dbReference>
<dbReference type="InterPro" id="IPR000504">
    <property type="entry name" value="RRM_dom"/>
</dbReference>
<dbReference type="PANTHER" id="PTHR44313">
    <property type="entry name" value="DNAJ HOMOLOG SUBFAMILY C MEMBER 17"/>
    <property type="match status" value="1"/>
</dbReference>
<dbReference type="PANTHER" id="PTHR44313:SF1">
    <property type="entry name" value="DNAJ HOMOLOG SUBFAMILY C MEMBER 17"/>
    <property type="match status" value="1"/>
</dbReference>
<dbReference type="Pfam" id="PF00226">
    <property type="entry name" value="DnaJ"/>
    <property type="match status" value="1"/>
</dbReference>
<dbReference type="Pfam" id="PF00076">
    <property type="entry name" value="RRM_1"/>
    <property type="match status" value="1"/>
</dbReference>
<dbReference type="PRINTS" id="PR00625">
    <property type="entry name" value="JDOMAIN"/>
</dbReference>
<dbReference type="SMART" id="SM00271">
    <property type="entry name" value="DnaJ"/>
    <property type="match status" value="1"/>
</dbReference>
<dbReference type="SUPFAM" id="SSF46565">
    <property type="entry name" value="Chaperone J-domain"/>
    <property type="match status" value="1"/>
</dbReference>
<dbReference type="SUPFAM" id="SSF54928">
    <property type="entry name" value="RNA-binding domain, RBD"/>
    <property type="match status" value="1"/>
</dbReference>
<dbReference type="PROSITE" id="PS50076">
    <property type="entry name" value="DNAJ_2"/>
    <property type="match status" value="1"/>
</dbReference>
<keyword id="KW-0143">Chaperone</keyword>
<keyword id="KW-0963">Cytoplasm</keyword>
<keyword id="KW-0488">Methylation</keyword>
<keyword id="KW-0539">Nucleus</keyword>
<keyword id="KW-0597">Phosphoprotein</keyword>
<keyword id="KW-1185">Reference proteome</keyword>
<keyword id="KW-0694">RNA-binding</keyword>
<keyword id="KW-0804">Transcription</keyword>
<keyword id="KW-0805">Transcription regulation</keyword>
<accession>Q91WT4</accession>
<accession>A3KGH2</accession>
<accession>Q8C5R1</accession>
<reference key="1">
    <citation type="journal article" date="2009" name="PLoS Biol.">
        <title>Lineage-specific biology revealed by a finished genome assembly of the mouse.</title>
        <authorList>
            <person name="Church D.M."/>
            <person name="Goodstadt L."/>
            <person name="Hillier L.W."/>
            <person name="Zody M.C."/>
            <person name="Goldstein S."/>
            <person name="She X."/>
            <person name="Bult C.J."/>
            <person name="Agarwala R."/>
            <person name="Cherry J.L."/>
            <person name="DiCuccio M."/>
            <person name="Hlavina W."/>
            <person name="Kapustin Y."/>
            <person name="Meric P."/>
            <person name="Maglott D."/>
            <person name="Birtle Z."/>
            <person name="Marques A.C."/>
            <person name="Graves T."/>
            <person name="Zhou S."/>
            <person name="Teague B."/>
            <person name="Potamousis K."/>
            <person name="Churas C."/>
            <person name="Place M."/>
            <person name="Herschleb J."/>
            <person name="Runnheim R."/>
            <person name="Forrest D."/>
            <person name="Amos-Landgraf J."/>
            <person name="Schwartz D.C."/>
            <person name="Cheng Z."/>
            <person name="Lindblad-Toh K."/>
            <person name="Eichler E.E."/>
            <person name="Ponting C.P."/>
        </authorList>
    </citation>
    <scope>NUCLEOTIDE SEQUENCE [LARGE SCALE GENOMIC DNA]</scope>
    <source>
        <strain>C57BL/6J</strain>
    </source>
</reference>
<reference key="2">
    <citation type="journal article" date="2004" name="Genome Res.">
        <title>The status, quality, and expansion of the NIH full-length cDNA project: the Mammalian Gene Collection (MGC).</title>
        <authorList>
            <consortium name="The MGC Project Team"/>
        </authorList>
    </citation>
    <scope>NUCLEOTIDE SEQUENCE [LARGE SCALE MRNA]</scope>
    <source>
        <strain>FVB/N</strain>
        <tissue>Liver</tissue>
    </source>
</reference>
<reference key="3">
    <citation type="journal article" date="2005" name="Science">
        <title>The transcriptional landscape of the mammalian genome.</title>
        <authorList>
            <person name="Carninci P."/>
            <person name="Kasukawa T."/>
            <person name="Katayama S."/>
            <person name="Gough J."/>
            <person name="Frith M.C."/>
            <person name="Maeda N."/>
            <person name="Oyama R."/>
            <person name="Ravasi T."/>
            <person name="Lenhard B."/>
            <person name="Wells C."/>
            <person name="Kodzius R."/>
            <person name="Shimokawa K."/>
            <person name="Bajic V.B."/>
            <person name="Brenner S.E."/>
            <person name="Batalov S."/>
            <person name="Forrest A.R."/>
            <person name="Zavolan M."/>
            <person name="Davis M.J."/>
            <person name="Wilming L.G."/>
            <person name="Aidinis V."/>
            <person name="Allen J.E."/>
            <person name="Ambesi-Impiombato A."/>
            <person name="Apweiler R."/>
            <person name="Aturaliya R.N."/>
            <person name="Bailey T.L."/>
            <person name="Bansal M."/>
            <person name="Baxter L."/>
            <person name="Beisel K.W."/>
            <person name="Bersano T."/>
            <person name="Bono H."/>
            <person name="Chalk A.M."/>
            <person name="Chiu K.P."/>
            <person name="Choudhary V."/>
            <person name="Christoffels A."/>
            <person name="Clutterbuck D.R."/>
            <person name="Crowe M.L."/>
            <person name="Dalla E."/>
            <person name="Dalrymple B.P."/>
            <person name="de Bono B."/>
            <person name="Della Gatta G."/>
            <person name="di Bernardo D."/>
            <person name="Down T."/>
            <person name="Engstrom P."/>
            <person name="Fagiolini M."/>
            <person name="Faulkner G."/>
            <person name="Fletcher C.F."/>
            <person name="Fukushima T."/>
            <person name="Furuno M."/>
            <person name="Futaki S."/>
            <person name="Gariboldi M."/>
            <person name="Georgii-Hemming P."/>
            <person name="Gingeras T.R."/>
            <person name="Gojobori T."/>
            <person name="Green R.E."/>
            <person name="Gustincich S."/>
            <person name="Harbers M."/>
            <person name="Hayashi Y."/>
            <person name="Hensch T.K."/>
            <person name="Hirokawa N."/>
            <person name="Hill D."/>
            <person name="Huminiecki L."/>
            <person name="Iacono M."/>
            <person name="Ikeo K."/>
            <person name="Iwama A."/>
            <person name="Ishikawa T."/>
            <person name="Jakt M."/>
            <person name="Kanapin A."/>
            <person name="Katoh M."/>
            <person name="Kawasawa Y."/>
            <person name="Kelso J."/>
            <person name="Kitamura H."/>
            <person name="Kitano H."/>
            <person name="Kollias G."/>
            <person name="Krishnan S.P."/>
            <person name="Kruger A."/>
            <person name="Kummerfeld S.K."/>
            <person name="Kurochkin I.V."/>
            <person name="Lareau L.F."/>
            <person name="Lazarevic D."/>
            <person name="Lipovich L."/>
            <person name="Liu J."/>
            <person name="Liuni S."/>
            <person name="McWilliam S."/>
            <person name="Madan Babu M."/>
            <person name="Madera M."/>
            <person name="Marchionni L."/>
            <person name="Matsuda H."/>
            <person name="Matsuzawa S."/>
            <person name="Miki H."/>
            <person name="Mignone F."/>
            <person name="Miyake S."/>
            <person name="Morris K."/>
            <person name="Mottagui-Tabar S."/>
            <person name="Mulder N."/>
            <person name="Nakano N."/>
            <person name="Nakauchi H."/>
            <person name="Ng P."/>
            <person name="Nilsson R."/>
            <person name="Nishiguchi S."/>
            <person name="Nishikawa S."/>
            <person name="Nori F."/>
            <person name="Ohara O."/>
            <person name="Okazaki Y."/>
            <person name="Orlando V."/>
            <person name="Pang K.C."/>
            <person name="Pavan W.J."/>
            <person name="Pavesi G."/>
            <person name="Pesole G."/>
            <person name="Petrovsky N."/>
            <person name="Piazza S."/>
            <person name="Reed J."/>
            <person name="Reid J.F."/>
            <person name="Ring B.Z."/>
            <person name="Ringwald M."/>
            <person name="Rost B."/>
            <person name="Ruan Y."/>
            <person name="Salzberg S.L."/>
            <person name="Sandelin A."/>
            <person name="Schneider C."/>
            <person name="Schoenbach C."/>
            <person name="Sekiguchi K."/>
            <person name="Semple C.A."/>
            <person name="Seno S."/>
            <person name="Sessa L."/>
            <person name="Sheng Y."/>
            <person name="Shibata Y."/>
            <person name="Shimada H."/>
            <person name="Shimada K."/>
            <person name="Silva D."/>
            <person name="Sinclair B."/>
            <person name="Sperling S."/>
            <person name="Stupka E."/>
            <person name="Sugiura K."/>
            <person name="Sultana R."/>
            <person name="Takenaka Y."/>
            <person name="Taki K."/>
            <person name="Tammoja K."/>
            <person name="Tan S.L."/>
            <person name="Tang S."/>
            <person name="Taylor M.S."/>
            <person name="Tegner J."/>
            <person name="Teichmann S.A."/>
            <person name="Ueda H.R."/>
            <person name="van Nimwegen E."/>
            <person name="Verardo R."/>
            <person name="Wei C.L."/>
            <person name="Yagi K."/>
            <person name="Yamanishi H."/>
            <person name="Zabarovsky E."/>
            <person name="Zhu S."/>
            <person name="Zimmer A."/>
            <person name="Hide W."/>
            <person name="Bult C."/>
            <person name="Grimmond S.M."/>
            <person name="Teasdale R.D."/>
            <person name="Liu E.T."/>
            <person name="Brusic V."/>
            <person name="Quackenbush J."/>
            <person name="Wahlestedt C."/>
            <person name="Mattick J.S."/>
            <person name="Hume D.A."/>
            <person name="Kai C."/>
            <person name="Sasaki D."/>
            <person name="Tomaru Y."/>
            <person name="Fukuda S."/>
            <person name="Kanamori-Katayama M."/>
            <person name="Suzuki M."/>
            <person name="Aoki J."/>
            <person name="Arakawa T."/>
            <person name="Iida J."/>
            <person name="Imamura K."/>
            <person name="Itoh M."/>
            <person name="Kato T."/>
            <person name="Kawaji H."/>
            <person name="Kawagashira N."/>
            <person name="Kawashima T."/>
            <person name="Kojima M."/>
            <person name="Kondo S."/>
            <person name="Konno H."/>
            <person name="Nakano K."/>
            <person name="Ninomiya N."/>
            <person name="Nishio T."/>
            <person name="Okada M."/>
            <person name="Plessy C."/>
            <person name="Shibata K."/>
            <person name="Shiraki T."/>
            <person name="Suzuki S."/>
            <person name="Tagami M."/>
            <person name="Waki K."/>
            <person name="Watahiki A."/>
            <person name="Okamura-Oho Y."/>
            <person name="Suzuki H."/>
            <person name="Kawai J."/>
            <person name="Hayashizaki Y."/>
        </authorList>
    </citation>
    <scope>NUCLEOTIDE SEQUENCE [LARGE SCALE MRNA] OF 5-303</scope>
    <source>
        <strain>C57BL/6J</strain>
        <tissue>Head</tissue>
    </source>
</reference>
<reference key="4">
    <citation type="journal article" date="2010" name="Cell">
        <title>A tissue-specific atlas of mouse protein phosphorylation and expression.</title>
        <authorList>
            <person name="Huttlin E.L."/>
            <person name="Jedrychowski M.P."/>
            <person name="Elias J.E."/>
            <person name="Goswami T."/>
            <person name="Rad R."/>
            <person name="Beausoleil S.A."/>
            <person name="Villen J."/>
            <person name="Haas W."/>
            <person name="Sowa M.E."/>
            <person name="Gygi S.P."/>
        </authorList>
    </citation>
    <scope>IDENTIFICATION BY MASS SPECTROMETRY [LARGE SCALE ANALYSIS]</scope>
    <source>
        <tissue>Spleen</tissue>
        <tissue>Testis</tissue>
    </source>
</reference>
<reference key="5">
    <citation type="journal article" date="2010" name="Endocrinology">
        <title>A locus on mouse chromosome 2 is involved in susceptibility to congenital hypothyroidism and contains an essential gene expressed in thyroid.</title>
        <authorList>
            <person name="Amendola E."/>
            <person name="Sanges R."/>
            <person name="Galvan A."/>
            <person name="Dathan N."/>
            <person name="Manenti G."/>
            <person name="Ferrandino G."/>
            <person name="Alvino F.M."/>
            <person name="Di Palma T."/>
            <person name="Scarfo M."/>
            <person name="Zannini M."/>
            <person name="Dragani T.A."/>
            <person name="De Felice M."/>
            <person name="Di Lauro R."/>
        </authorList>
    </citation>
    <scope>FUNCTION</scope>
    <scope>TISSUE SPECIFICITY</scope>
    <scope>DISRUPTION PHENOTYPE</scope>
</reference>
<proteinExistence type="evidence at protein level"/>
<protein>
    <recommendedName>
        <fullName>DnaJ homolog subfamily C member 17</fullName>
    </recommendedName>
</protein>
<gene>
    <name type="primary">Dnajc17</name>
</gene>
<comment type="function">
    <text evidence="5">May negatively affect PAX8-induced thyroglobulin/TG transcription.</text>
</comment>
<comment type="subcellular location">
    <subcellularLocation>
        <location evidence="1">Cytoplasm</location>
    </subcellularLocation>
    <subcellularLocation>
        <location evidence="1">Nucleus</location>
    </subcellularLocation>
    <text evidence="1">Predominantly nuclear.</text>
</comment>
<comment type="tissue specificity">
    <text evidence="5">Expressed in the thyroid gland.</text>
</comment>
<comment type="disruption phenotype">
    <text evidence="5">Embryonic lethal after the morula stage.</text>
</comment>
<evidence type="ECO:0000250" key="1">
    <source>
        <dbReference type="UniProtKB" id="D3ZSC8"/>
    </source>
</evidence>
<evidence type="ECO:0000250" key="2">
    <source>
        <dbReference type="UniProtKB" id="Q9NVM6"/>
    </source>
</evidence>
<evidence type="ECO:0000255" key="3">
    <source>
        <dbReference type="PROSITE-ProRule" id="PRU00286"/>
    </source>
</evidence>
<evidence type="ECO:0000256" key="4">
    <source>
        <dbReference type="SAM" id="MobiDB-lite"/>
    </source>
</evidence>
<evidence type="ECO:0000269" key="5">
    <source>
    </source>
</evidence>
<evidence type="ECO:0000305" key="6"/>
<feature type="chain" id="PRO_0000247119" description="DnaJ homolog subfamily C member 17">
    <location>
        <begin position="1"/>
        <end position="303"/>
    </location>
</feature>
<feature type="domain" description="J" evidence="3">
    <location>
        <begin position="11"/>
        <end position="76"/>
    </location>
</feature>
<feature type="domain" description="RRM">
    <location>
        <begin position="178"/>
        <end position="249"/>
    </location>
</feature>
<feature type="region of interest" description="Disordered" evidence="4">
    <location>
        <begin position="104"/>
        <end position="123"/>
    </location>
</feature>
<feature type="region of interest" description="Disordered" evidence="4">
    <location>
        <begin position="150"/>
        <end position="170"/>
    </location>
</feature>
<feature type="compositionally biased region" description="Basic and acidic residues" evidence="4">
    <location>
        <begin position="150"/>
        <end position="166"/>
    </location>
</feature>
<feature type="modified residue" description="Phosphoserine" evidence="2">
    <location>
        <position position="112"/>
    </location>
</feature>
<feature type="modified residue" description="N6-methyllysine" evidence="2">
    <location>
        <position position="264"/>
    </location>
</feature>
<feature type="sequence conflict" description="In Ref. 2; AAH13487." evidence="6" ref="2">
    <original>Q</original>
    <variation>R</variation>
    <location>
        <position position="152"/>
    </location>
</feature>
<feature type="sequence conflict" description="In Ref. 2; AAH13487." evidence="6" ref="2">
    <original>R</original>
    <variation>E</variation>
    <location>
        <position position="161"/>
    </location>
</feature>
<feature type="sequence conflict" description="In Ref. 2; AAH13487." evidence="6" ref="2">
    <original>E</original>
    <variation>D</variation>
    <location>
        <position position="184"/>
    </location>
</feature>
<feature type="sequence conflict" description="In Ref. 2; AAH13487." evidence="6" ref="2">
    <original>G</original>
    <variation>S</variation>
    <location>
        <position position="258"/>
    </location>
</feature>
<feature type="sequence conflict" description="In Ref. 2; AAH13487." evidence="6" ref="2">
    <original>F</original>
    <variation>Y</variation>
    <location>
        <position position="273"/>
    </location>
</feature>
<name>DJC17_MOUSE</name>